<feature type="chain" id="PRO_0000363047" description="S-adenosylmethionine synthase">
    <location>
        <begin position="1"/>
        <end position="393"/>
    </location>
</feature>
<feature type="binding site" evidence="3">
    <location>
        <position position="9"/>
    </location>
    <ligand>
        <name>Mg(2+)</name>
        <dbReference type="ChEBI" id="CHEBI:18420"/>
    </ligand>
</feature>
<feature type="binding site" description="in other chain" evidence="4">
    <location>
        <position position="15"/>
    </location>
    <ligand>
        <name>ATP</name>
        <dbReference type="ChEBI" id="CHEBI:30616"/>
        <note>ligand shared between two neighboring subunits</note>
    </ligand>
</feature>
<feature type="binding site" evidence="2">
    <location>
        <position position="43"/>
    </location>
    <ligand>
        <name>K(+)</name>
        <dbReference type="ChEBI" id="CHEBI:29103"/>
    </ligand>
</feature>
<feature type="binding site" description="in other chain" evidence="2">
    <location>
        <position position="56"/>
    </location>
    <ligand>
        <name>L-methionine</name>
        <dbReference type="ChEBI" id="CHEBI:57844"/>
        <note>ligand shared between two neighboring subunits</note>
    </ligand>
</feature>
<feature type="binding site" description="in other chain" evidence="2">
    <location>
        <position position="99"/>
    </location>
    <ligand>
        <name>L-methionine</name>
        <dbReference type="ChEBI" id="CHEBI:57844"/>
        <note>ligand shared between two neighboring subunits</note>
    </ligand>
</feature>
<feature type="binding site" description="in other chain" evidence="4">
    <location>
        <begin position="167"/>
        <end position="169"/>
    </location>
    <ligand>
        <name>ATP</name>
        <dbReference type="ChEBI" id="CHEBI:30616"/>
        <note>ligand shared between two neighboring subunits</note>
    </ligand>
</feature>
<feature type="binding site" description="in other chain" evidence="4">
    <location>
        <begin position="235"/>
        <end position="238"/>
    </location>
    <ligand>
        <name>ATP</name>
        <dbReference type="ChEBI" id="CHEBI:30616"/>
        <note>ligand shared between two neighboring subunits</note>
    </ligand>
</feature>
<feature type="binding site" description="in other chain" evidence="4">
    <location>
        <position position="246"/>
    </location>
    <ligand>
        <name>ATP</name>
        <dbReference type="ChEBI" id="CHEBI:30616"/>
        <note>ligand shared between two neighboring subunits</note>
    </ligand>
</feature>
<feature type="binding site" evidence="2">
    <location>
        <position position="246"/>
    </location>
    <ligand>
        <name>L-methionine</name>
        <dbReference type="ChEBI" id="CHEBI:57844"/>
        <note>ligand shared between two neighboring subunits</note>
    </ligand>
</feature>
<feature type="binding site" description="in other chain" evidence="2">
    <location>
        <begin position="252"/>
        <end position="253"/>
    </location>
    <ligand>
        <name>ATP</name>
        <dbReference type="ChEBI" id="CHEBI:30616"/>
        <note>ligand shared between two neighboring subunits</note>
    </ligand>
</feature>
<feature type="binding site" evidence="2">
    <location>
        <position position="269"/>
    </location>
    <ligand>
        <name>ATP</name>
        <dbReference type="ChEBI" id="CHEBI:30616"/>
        <note>ligand shared between two neighboring subunits</note>
    </ligand>
</feature>
<feature type="binding site" evidence="2">
    <location>
        <position position="273"/>
    </location>
    <ligand>
        <name>ATP</name>
        <dbReference type="ChEBI" id="CHEBI:30616"/>
        <note>ligand shared between two neighboring subunits</note>
    </ligand>
</feature>
<feature type="binding site" evidence="3">
    <location>
        <position position="277"/>
    </location>
    <ligand>
        <name>ATP</name>
        <dbReference type="ChEBI" id="CHEBI:30616"/>
        <note>ligand shared between two neighboring subunits</note>
    </ligand>
</feature>
<feature type="binding site" description="in other chain" evidence="2">
    <location>
        <position position="277"/>
    </location>
    <ligand>
        <name>L-methionine</name>
        <dbReference type="ChEBI" id="CHEBI:57844"/>
        <note>ligand shared between two neighboring subunits</note>
    </ligand>
</feature>
<accession>Q6GV10</accession>
<reference key="1">
    <citation type="submission" date="2004-05" db="EMBL/GenBank/DDBJ databases">
        <title>SAM and polyamine levels in transgenic tomato fruits and potato tuber with SAM synthase gene.</title>
        <authorList>
            <person name="Seo H.W."/>
            <person name="Yi J.Y."/>
            <person name="Moon J.Y."/>
            <person name="Park Y.E."/>
            <person name="Cho J.H."/>
        </authorList>
    </citation>
    <scope>NUCLEOTIDE SEQUENCE [MRNA]</scope>
    <source>
        <tissue>Leaf</tissue>
    </source>
</reference>
<organism>
    <name type="scientific">Solanum palustre</name>
    <name type="common">Non-tuber-performing potato</name>
    <name type="synonym">Solanum brevidens</name>
    <dbReference type="NCBI Taxonomy" id="4115"/>
    <lineage>
        <taxon>Eukaryota</taxon>
        <taxon>Viridiplantae</taxon>
        <taxon>Streptophyta</taxon>
        <taxon>Embryophyta</taxon>
        <taxon>Tracheophyta</taxon>
        <taxon>Spermatophyta</taxon>
        <taxon>Magnoliopsida</taxon>
        <taxon>eudicotyledons</taxon>
        <taxon>Gunneridae</taxon>
        <taxon>Pentapetalae</taxon>
        <taxon>asterids</taxon>
        <taxon>lamiids</taxon>
        <taxon>Solanales</taxon>
        <taxon>Solanaceae</taxon>
        <taxon>Solanoideae</taxon>
        <taxon>Solaneae</taxon>
        <taxon>Solanum</taxon>
    </lineage>
</organism>
<comment type="function">
    <text evidence="5">Catalyzes the formation of S-adenosylmethionine from methionine and ATP. The reaction comprises two steps that are both catalyzed by the same enzyme: formation of S-adenosylmethionine (AdoMet) and triphosphate, and subsequent hydrolysis of the triphosphate.</text>
</comment>
<comment type="catalytic activity">
    <reaction evidence="5">
        <text>L-methionine + ATP + H2O = S-adenosyl-L-methionine + phosphate + diphosphate</text>
        <dbReference type="Rhea" id="RHEA:21080"/>
        <dbReference type="ChEBI" id="CHEBI:15377"/>
        <dbReference type="ChEBI" id="CHEBI:30616"/>
        <dbReference type="ChEBI" id="CHEBI:33019"/>
        <dbReference type="ChEBI" id="CHEBI:43474"/>
        <dbReference type="ChEBI" id="CHEBI:57844"/>
        <dbReference type="ChEBI" id="CHEBI:59789"/>
        <dbReference type="EC" id="2.5.1.6"/>
    </reaction>
</comment>
<comment type="cofactor">
    <cofactor evidence="5">
        <name>Mn(2+)</name>
        <dbReference type="ChEBI" id="CHEBI:29035"/>
    </cofactor>
    <cofactor evidence="5">
        <name>Mg(2+)</name>
        <dbReference type="ChEBI" id="CHEBI:18420"/>
    </cofactor>
    <cofactor evidence="5">
        <name>Co(2+)</name>
        <dbReference type="ChEBI" id="CHEBI:48828"/>
    </cofactor>
    <text evidence="3 5">Binds 2 divalent ions per subunit. The metal ions interact primarily with the substrate (By similarity). Can utilize magnesium, manganese or cobalt (in vitro) (By similarity).</text>
</comment>
<comment type="cofactor">
    <cofactor evidence="5">
        <name>K(+)</name>
        <dbReference type="ChEBI" id="CHEBI:29103"/>
    </cofactor>
    <text evidence="3">Binds 1 potassium ion per subunit. The potassium ion interacts primarily with the substrate (By similarity).</text>
</comment>
<comment type="pathway">
    <text evidence="5">Amino-acid biosynthesis; S-adenosyl-L-methionine biosynthesis; S-adenosyl-L-methionine from L-methionine: step 1/1.</text>
</comment>
<comment type="subunit">
    <text evidence="1">Homotetramer.</text>
</comment>
<comment type="subcellular location">
    <subcellularLocation>
        <location evidence="1">Cytoplasm</location>
    </subcellularLocation>
</comment>
<comment type="similarity">
    <text evidence="6">Belongs to the AdoMet synthase family.</text>
</comment>
<dbReference type="EC" id="2.5.1.6" evidence="5"/>
<dbReference type="EMBL" id="AY635050">
    <property type="protein sequence ID" value="AAT47716.1"/>
    <property type="molecule type" value="mRNA"/>
</dbReference>
<dbReference type="SMR" id="Q6GV10"/>
<dbReference type="UniPathway" id="UPA00315">
    <property type="reaction ID" value="UER00080"/>
</dbReference>
<dbReference type="GO" id="GO:0005737">
    <property type="term" value="C:cytoplasm"/>
    <property type="evidence" value="ECO:0007669"/>
    <property type="project" value="UniProtKB-SubCell"/>
</dbReference>
<dbReference type="GO" id="GO:0005524">
    <property type="term" value="F:ATP binding"/>
    <property type="evidence" value="ECO:0007669"/>
    <property type="project" value="UniProtKB-KW"/>
</dbReference>
<dbReference type="GO" id="GO:0046872">
    <property type="term" value="F:metal ion binding"/>
    <property type="evidence" value="ECO:0007669"/>
    <property type="project" value="UniProtKB-KW"/>
</dbReference>
<dbReference type="GO" id="GO:0004478">
    <property type="term" value="F:methionine adenosyltransferase activity"/>
    <property type="evidence" value="ECO:0007669"/>
    <property type="project" value="UniProtKB-EC"/>
</dbReference>
<dbReference type="GO" id="GO:0006730">
    <property type="term" value="P:one-carbon metabolic process"/>
    <property type="evidence" value="ECO:0007669"/>
    <property type="project" value="UniProtKB-KW"/>
</dbReference>
<dbReference type="GO" id="GO:0006556">
    <property type="term" value="P:S-adenosylmethionine biosynthetic process"/>
    <property type="evidence" value="ECO:0007669"/>
    <property type="project" value="UniProtKB-UniPathway"/>
</dbReference>
<dbReference type="CDD" id="cd18079">
    <property type="entry name" value="S-AdoMet_synt"/>
    <property type="match status" value="1"/>
</dbReference>
<dbReference type="FunFam" id="3.30.300.10:FF:000001">
    <property type="entry name" value="S-adenosylmethionine synthase"/>
    <property type="match status" value="1"/>
</dbReference>
<dbReference type="FunFam" id="3.30.300.10:FF:000003">
    <property type="entry name" value="S-adenosylmethionine synthase"/>
    <property type="match status" value="1"/>
</dbReference>
<dbReference type="FunFam" id="3.30.300.10:FF:000004">
    <property type="entry name" value="S-adenosylmethionine synthase"/>
    <property type="match status" value="1"/>
</dbReference>
<dbReference type="Gene3D" id="3.30.300.10">
    <property type="match status" value="3"/>
</dbReference>
<dbReference type="HAMAP" id="MF_00086">
    <property type="entry name" value="S_AdoMet_synth1"/>
    <property type="match status" value="1"/>
</dbReference>
<dbReference type="InterPro" id="IPR022631">
    <property type="entry name" value="ADOMET_SYNTHASE_CS"/>
</dbReference>
<dbReference type="InterPro" id="IPR022630">
    <property type="entry name" value="S-AdoMet_synt_C"/>
</dbReference>
<dbReference type="InterPro" id="IPR022629">
    <property type="entry name" value="S-AdoMet_synt_central"/>
</dbReference>
<dbReference type="InterPro" id="IPR022628">
    <property type="entry name" value="S-AdoMet_synt_N"/>
</dbReference>
<dbReference type="InterPro" id="IPR002133">
    <property type="entry name" value="S-AdoMet_synthetase"/>
</dbReference>
<dbReference type="InterPro" id="IPR022636">
    <property type="entry name" value="S-AdoMet_synthetase_sfam"/>
</dbReference>
<dbReference type="NCBIfam" id="TIGR01034">
    <property type="entry name" value="metK"/>
    <property type="match status" value="1"/>
</dbReference>
<dbReference type="PANTHER" id="PTHR11964">
    <property type="entry name" value="S-ADENOSYLMETHIONINE SYNTHETASE"/>
    <property type="match status" value="1"/>
</dbReference>
<dbReference type="Pfam" id="PF02773">
    <property type="entry name" value="S-AdoMet_synt_C"/>
    <property type="match status" value="1"/>
</dbReference>
<dbReference type="Pfam" id="PF02772">
    <property type="entry name" value="S-AdoMet_synt_M"/>
    <property type="match status" value="1"/>
</dbReference>
<dbReference type="Pfam" id="PF00438">
    <property type="entry name" value="S-AdoMet_synt_N"/>
    <property type="match status" value="1"/>
</dbReference>
<dbReference type="PIRSF" id="PIRSF000497">
    <property type="entry name" value="MAT"/>
    <property type="match status" value="1"/>
</dbReference>
<dbReference type="SUPFAM" id="SSF55973">
    <property type="entry name" value="S-adenosylmethionine synthetase"/>
    <property type="match status" value="3"/>
</dbReference>
<dbReference type="PROSITE" id="PS00376">
    <property type="entry name" value="ADOMET_SYNTHASE_1"/>
    <property type="match status" value="1"/>
</dbReference>
<dbReference type="PROSITE" id="PS00377">
    <property type="entry name" value="ADOMET_SYNTHASE_2"/>
    <property type="match status" value="1"/>
</dbReference>
<name>METK_SOLPL</name>
<sequence>METFLFTSESVNEGHPDKLCDQISDAVLDACLEQDPESKVACETCTKTNLVMVFGEITTKAIVDYEKIVRDTCRNIGFVSDDVGLDADNCKVLVYIEQQSPDIAQGVHGHLTKRPEEIGAGDQGHMFGYATDETPELMPLSHVLATKLGARLTEVRKNGTCRWLKPDGKTQVTVEYCNDNGAMIPIRVHTVLISTQHDETVTNDEIARDLKEHAIKPVIPEKYLDEKTIFHLNPSGRFVIGGPHGDAGLTGRKIIIDTYGGWGAHGGGAFSGKDPTKVDRSGAYIVRQAAKSIVASGLARRCIVQVSYAIGVPEPLSVFVDTYGTGKIPDREILKIVKENFDFRPGMMSINLDLKRGGNGRFLKTAAYGHFGRDDADFTWEVVKPLKWENPQD</sequence>
<keyword id="KW-0067">ATP-binding</keyword>
<keyword id="KW-0170">Cobalt</keyword>
<keyword id="KW-0963">Cytoplasm</keyword>
<keyword id="KW-0460">Magnesium</keyword>
<keyword id="KW-0479">Metal-binding</keyword>
<keyword id="KW-0547">Nucleotide-binding</keyword>
<keyword id="KW-0554">One-carbon metabolism</keyword>
<keyword id="KW-0630">Potassium</keyword>
<keyword id="KW-0808">Transferase</keyword>
<gene>
    <name type="primary">SAMS</name>
</gene>
<evidence type="ECO:0000250" key="1"/>
<evidence type="ECO:0000250" key="2">
    <source>
        <dbReference type="UniProtKB" id="P0A817"/>
    </source>
</evidence>
<evidence type="ECO:0000250" key="3">
    <source>
        <dbReference type="UniProtKB" id="P13444"/>
    </source>
</evidence>
<evidence type="ECO:0000250" key="4">
    <source>
        <dbReference type="UniProtKB" id="Q00266"/>
    </source>
</evidence>
<evidence type="ECO:0000250" key="5">
    <source>
        <dbReference type="UniProtKB" id="Q96551"/>
    </source>
</evidence>
<evidence type="ECO:0000305" key="6"/>
<proteinExistence type="evidence at transcript level"/>
<protein>
    <recommendedName>
        <fullName>S-adenosylmethionine synthase</fullName>
        <shortName>AdoMet synthase</shortName>
        <ecNumber evidence="5">2.5.1.6</ecNumber>
    </recommendedName>
    <alternativeName>
        <fullName>Methionine adenosyltransferase</fullName>
        <shortName>MAT</shortName>
    </alternativeName>
</protein>